<sequence>MSDVEKVDGECSASGKRERLTLKLGDKLKVPPSLARGTSTGKSFTTVEVRSKKRRPGEYISHDDKRRSGLNKAVSGLTAQEQLFRINAINMADSISAKEKELAAARKAKEEEELAAAAAVVEEAVEEVSVEGDVPPVEAVEAAVPDVEEVVAPVATPSHSNKSGHDDRGGKKYAHGATGRHKEKEGVSIKKVASSRGASKHIKLDIENALSGLEDKRVTRFSSSTHKRRSSNVKSGRRISREVVISDKMTVRDLALAMAEKAQDVLRMLSHVGVEARMDTGLDSEVACEIAVEFGHRPRVVSIVKMEQELSDVCGDDFVSEPRPPVVTVMGHVDHGKTSLLDVLRKSNVAEKEFRGITQHIGAYQIDVDGKKITFLDTPGHEAFADMRARGANVTDIVVLVVAADDGIMPQTVESINHVKAAGVAMVVAVNKIDKSDADVGRITNELLQYGVIAEELGGDVMIVPVSAKTGENIDKLQSAILLLAEMLELSAPRECRAQGVVIEAKIDRGCGVVATVIVQKGTLKKGDIIVAGDSSYGKVRSMFDDADRVVTSALPAMPVRVLGLNAIPKAGDTLIVMPSEKQARDLLWHRSEINSAREENRAVPSFSGAIMASMDSKVEEINLILKADVAGSMEAVSCAVEQLVHEEVKFNVLHKEMGDVTKSDVLLAEVSSAVILAFNVRVDAKARDLLRLKKVDVRHYQVIYDLVDDVRNMVSGKLKPIVQEMQVGLLTVRQMFSSGKSGTVLGCYVTEGAVTRGATVCVCRGETVIGEGTVKALRRFKEDVKEVNRGLECGLLVDGVKGVLAGDVIKVLEIVERMRGVE</sequence>
<accession>Q2GKQ2</accession>
<keyword id="KW-0963">Cytoplasm</keyword>
<keyword id="KW-0342">GTP-binding</keyword>
<keyword id="KW-0396">Initiation factor</keyword>
<keyword id="KW-0547">Nucleotide-binding</keyword>
<keyword id="KW-0648">Protein biosynthesis</keyword>
<gene>
    <name evidence="2" type="primary">infB</name>
    <name type="ordered locus">APH_0446</name>
</gene>
<proteinExistence type="inferred from homology"/>
<reference key="1">
    <citation type="journal article" date="2006" name="PLoS Genet.">
        <title>Comparative genomics of emerging human ehrlichiosis agents.</title>
        <authorList>
            <person name="Dunning Hotopp J.C."/>
            <person name="Lin M."/>
            <person name="Madupu R."/>
            <person name="Crabtree J."/>
            <person name="Angiuoli S.V."/>
            <person name="Eisen J.A."/>
            <person name="Seshadri R."/>
            <person name="Ren Q."/>
            <person name="Wu M."/>
            <person name="Utterback T.R."/>
            <person name="Smith S."/>
            <person name="Lewis M."/>
            <person name="Khouri H."/>
            <person name="Zhang C."/>
            <person name="Niu H."/>
            <person name="Lin Q."/>
            <person name="Ohashi N."/>
            <person name="Zhi N."/>
            <person name="Nelson W.C."/>
            <person name="Brinkac L.M."/>
            <person name="Dodson R.J."/>
            <person name="Rosovitz M.J."/>
            <person name="Sundaram J.P."/>
            <person name="Daugherty S.C."/>
            <person name="Davidsen T."/>
            <person name="Durkin A.S."/>
            <person name="Gwinn M.L."/>
            <person name="Haft D.H."/>
            <person name="Selengut J.D."/>
            <person name="Sullivan S.A."/>
            <person name="Zafar N."/>
            <person name="Zhou L."/>
            <person name="Benahmed F."/>
            <person name="Forberger H."/>
            <person name="Halpin R."/>
            <person name="Mulligan S."/>
            <person name="Robinson J."/>
            <person name="White O."/>
            <person name="Rikihisa Y."/>
            <person name="Tettelin H."/>
        </authorList>
    </citation>
    <scope>NUCLEOTIDE SEQUENCE [LARGE SCALE GENOMIC DNA]</scope>
    <source>
        <strain>HZ</strain>
    </source>
</reference>
<evidence type="ECO:0000250" key="1"/>
<evidence type="ECO:0000255" key="2">
    <source>
        <dbReference type="HAMAP-Rule" id="MF_00100"/>
    </source>
</evidence>
<evidence type="ECO:0000256" key="3">
    <source>
        <dbReference type="SAM" id="MobiDB-lite"/>
    </source>
</evidence>
<name>IF2_ANAPZ</name>
<comment type="function">
    <text evidence="2">One of the essential components for the initiation of protein synthesis. Protects formylmethionyl-tRNA from spontaneous hydrolysis and promotes its binding to the 30S ribosomal subunits. Also involved in the hydrolysis of GTP during the formation of the 70S ribosomal complex.</text>
</comment>
<comment type="subcellular location">
    <subcellularLocation>
        <location evidence="2">Cytoplasm</location>
    </subcellularLocation>
</comment>
<comment type="similarity">
    <text evidence="2">Belongs to the TRAFAC class translation factor GTPase superfamily. Classic translation factor GTPase family. IF-2 subfamily.</text>
</comment>
<organism>
    <name type="scientific">Anaplasma phagocytophilum (strain HZ)</name>
    <dbReference type="NCBI Taxonomy" id="212042"/>
    <lineage>
        <taxon>Bacteria</taxon>
        <taxon>Pseudomonadati</taxon>
        <taxon>Pseudomonadota</taxon>
        <taxon>Alphaproteobacteria</taxon>
        <taxon>Rickettsiales</taxon>
        <taxon>Anaplasmataceae</taxon>
        <taxon>Anaplasma</taxon>
        <taxon>phagocytophilum group</taxon>
    </lineage>
</organism>
<protein>
    <recommendedName>
        <fullName evidence="2">Translation initiation factor IF-2</fullName>
    </recommendedName>
</protein>
<dbReference type="EMBL" id="CP000235">
    <property type="protein sequence ID" value="ABD43852.1"/>
    <property type="molecule type" value="Genomic_DNA"/>
</dbReference>
<dbReference type="SMR" id="Q2GKQ2"/>
<dbReference type="STRING" id="212042.APH_0446"/>
<dbReference type="PaxDb" id="212042-APH_0446"/>
<dbReference type="EnsemblBacteria" id="ABD43852">
    <property type="protein sequence ID" value="ABD43852"/>
    <property type="gene ID" value="APH_0446"/>
</dbReference>
<dbReference type="KEGG" id="aph:APH_0446"/>
<dbReference type="eggNOG" id="COG0532">
    <property type="taxonomic scope" value="Bacteria"/>
</dbReference>
<dbReference type="HOGENOM" id="CLU_006301_10_2_5"/>
<dbReference type="Proteomes" id="UP000001943">
    <property type="component" value="Chromosome"/>
</dbReference>
<dbReference type="GO" id="GO:0005737">
    <property type="term" value="C:cytoplasm"/>
    <property type="evidence" value="ECO:0007669"/>
    <property type="project" value="UniProtKB-SubCell"/>
</dbReference>
<dbReference type="GO" id="GO:0005525">
    <property type="term" value="F:GTP binding"/>
    <property type="evidence" value="ECO:0007669"/>
    <property type="project" value="UniProtKB-KW"/>
</dbReference>
<dbReference type="GO" id="GO:0003924">
    <property type="term" value="F:GTPase activity"/>
    <property type="evidence" value="ECO:0007669"/>
    <property type="project" value="UniProtKB-UniRule"/>
</dbReference>
<dbReference type="GO" id="GO:0003743">
    <property type="term" value="F:translation initiation factor activity"/>
    <property type="evidence" value="ECO:0007669"/>
    <property type="project" value="UniProtKB-UniRule"/>
</dbReference>
<dbReference type="CDD" id="cd01887">
    <property type="entry name" value="IF2_eIF5B"/>
    <property type="match status" value="1"/>
</dbReference>
<dbReference type="CDD" id="cd03702">
    <property type="entry name" value="IF2_mtIF2_II"/>
    <property type="match status" value="1"/>
</dbReference>
<dbReference type="CDD" id="cd03692">
    <property type="entry name" value="mtIF2_IVc"/>
    <property type="match status" value="1"/>
</dbReference>
<dbReference type="FunFam" id="2.40.30.10:FF:000008">
    <property type="entry name" value="Translation initiation factor IF-2"/>
    <property type="match status" value="1"/>
</dbReference>
<dbReference type="FunFam" id="2.40.30.10:FF:000054">
    <property type="entry name" value="Translation initiation factor IF-2"/>
    <property type="match status" value="1"/>
</dbReference>
<dbReference type="FunFam" id="3.40.50.10050:FF:000001">
    <property type="entry name" value="Translation initiation factor IF-2"/>
    <property type="match status" value="1"/>
</dbReference>
<dbReference type="FunFam" id="3.40.50.300:FF:000019">
    <property type="entry name" value="Translation initiation factor IF-2"/>
    <property type="match status" value="1"/>
</dbReference>
<dbReference type="Gene3D" id="3.40.50.300">
    <property type="entry name" value="P-loop containing nucleotide triphosphate hydrolases"/>
    <property type="match status" value="1"/>
</dbReference>
<dbReference type="Gene3D" id="2.40.30.10">
    <property type="entry name" value="Translation factors"/>
    <property type="match status" value="2"/>
</dbReference>
<dbReference type="Gene3D" id="3.40.50.10050">
    <property type="entry name" value="Translation initiation factor IF- 2, domain 3"/>
    <property type="match status" value="1"/>
</dbReference>
<dbReference type="HAMAP" id="MF_00100_B">
    <property type="entry name" value="IF_2_B"/>
    <property type="match status" value="1"/>
</dbReference>
<dbReference type="InterPro" id="IPR053905">
    <property type="entry name" value="EF-G-like_DII"/>
</dbReference>
<dbReference type="InterPro" id="IPR044145">
    <property type="entry name" value="IF2_II"/>
</dbReference>
<dbReference type="InterPro" id="IPR006847">
    <property type="entry name" value="IF2_N"/>
</dbReference>
<dbReference type="InterPro" id="IPR027417">
    <property type="entry name" value="P-loop_NTPase"/>
</dbReference>
<dbReference type="InterPro" id="IPR005225">
    <property type="entry name" value="Small_GTP-bd"/>
</dbReference>
<dbReference type="InterPro" id="IPR000795">
    <property type="entry name" value="T_Tr_GTP-bd_dom"/>
</dbReference>
<dbReference type="InterPro" id="IPR000178">
    <property type="entry name" value="TF_IF2_bacterial-like"/>
</dbReference>
<dbReference type="InterPro" id="IPR015760">
    <property type="entry name" value="TIF_IF2"/>
</dbReference>
<dbReference type="InterPro" id="IPR023115">
    <property type="entry name" value="TIF_IF2_dom3"/>
</dbReference>
<dbReference type="InterPro" id="IPR036925">
    <property type="entry name" value="TIF_IF2_dom3_sf"/>
</dbReference>
<dbReference type="InterPro" id="IPR009000">
    <property type="entry name" value="Transl_B-barrel_sf"/>
</dbReference>
<dbReference type="NCBIfam" id="TIGR00487">
    <property type="entry name" value="IF-2"/>
    <property type="match status" value="1"/>
</dbReference>
<dbReference type="NCBIfam" id="TIGR00231">
    <property type="entry name" value="small_GTP"/>
    <property type="match status" value="1"/>
</dbReference>
<dbReference type="PANTHER" id="PTHR43381:SF5">
    <property type="entry name" value="TR-TYPE G DOMAIN-CONTAINING PROTEIN"/>
    <property type="match status" value="1"/>
</dbReference>
<dbReference type="PANTHER" id="PTHR43381">
    <property type="entry name" value="TRANSLATION INITIATION FACTOR IF-2-RELATED"/>
    <property type="match status" value="1"/>
</dbReference>
<dbReference type="Pfam" id="PF22042">
    <property type="entry name" value="EF-G_D2"/>
    <property type="match status" value="1"/>
</dbReference>
<dbReference type="Pfam" id="PF00009">
    <property type="entry name" value="GTP_EFTU"/>
    <property type="match status" value="1"/>
</dbReference>
<dbReference type="Pfam" id="PF11987">
    <property type="entry name" value="IF-2"/>
    <property type="match status" value="1"/>
</dbReference>
<dbReference type="Pfam" id="PF04760">
    <property type="entry name" value="IF2_N"/>
    <property type="match status" value="1"/>
</dbReference>
<dbReference type="SUPFAM" id="SSF52156">
    <property type="entry name" value="Initiation factor IF2/eIF5b, domain 3"/>
    <property type="match status" value="1"/>
</dbReference>
<dbReference type="SUPFAM" id="SSF52540">
    <property type="entry name" value="P-loop containing nucleoside triphosphate hydrolases"/>
    <property type="match status" value="1"/>
</dbReference>
<dbReference type="SUPFAM" id="SSF50447">
    <property type="entry name" value="Translation proteins"/>
    <property type="match status" value="2"/>
</dbReference>
<dbReference type="PROSITE" id="PS51722">
    <property type="entry name" value="G_TR_2"/>
    <property type="match status" value="1"/>
</dbReference>
<dbReference type="PROSITE" id="PS01176">
    <property type="entry name" value="IF2"/>
    <property type="match status" value="1"/>
</dbReference>
<feature type="chain" id="PRO_1000057650" description="Translation initiation factor IF-2">
    <location>
        <begin position="1"/>
        <end position="823"/>
    </location>
</feature>
<feature type="domain" description="tr-type G">
    <location>
        <begin position="322"/>
        <end position="491"/>
    </location>
</feature>
<feature type="region of interest" description="Disordered" evidence="3">
    <location>
        <begin position="30"/>
        <end position="66"/>
    </location>
</feature>
<feature type="region of interest" description="Disordered" evidence="3">
    <location>
        <begin position="156"/>
        <end position="192"/>
    </location>
</feature>
<feature type="region of interest" description="G1" evidence="1">
    <location>
        <begin position="331"/>
        <end position="338"/>
    </location>
</feature>
<feature type="region of interest" description="G2" evidence="1">
    <location>
        <begin position="356"/>
        <end position="360"/>
    </location>
</feature>
<feature type="region of interest" description="G3" evidence="1">
    <location>
        <begin position="377"/>
        <end position="380"/>
    </location>
</feature>
<feature type="region of interest" description="G4" evidence="1">
    <location>
        <begin position="431"/>
        <end position="434"/>
    </location>
</feature>
<feature type="region of interest" description="G5" evidence="1">
    <location>
        <begin position="467"/>
        <end position="469"/>
    </location>
</feature>
<feature type="compositionally biased region" description="Polar residues" evidence="3">
    <location>
        <begin position="36"/>
        <end position="48"/>
    </location>
</feature>
<feature type="compositionally biased region" description="Basic and acidic residues" evidence="3">
    <location>
        <begin position="56"/>
        <end position="66"/>
    </location>
</feature>
<feature type="binding site" evidence="2">
    <location>
        <begin position="331"/>
        <end position="338"/>
    </location>
    <ligand>
        <name>GTP</name>
        <dbReference type="ChEBI" id="CHEBI:37565"/>
    </ligand>
</feature>
<feature type="binding site" evidence="2">
    <location>
        <begin position="377"/>
        <end position="381"/>
    </location>
    <ligand>
        <name>GTP</name>
        <dbReference type="ChEBI" id="CHEBI:37565"/>
    </ligand>
</feature>
<feature type="binding site" evidence="2">
    <location>
        <begin position="431"/>
        <end position="434"/>
    </location>
    <ligand>
        <name>GTP</name>
        <dbReference type="ChEBI" id="CHEBI:37565"/>
    </ligand>
</feature>